<accession>B8EMR7</accession>
<sequence length="142" mass="14941">MAKKITGFVKLQVPAGAANPSPPIGPALGQRGLNIMEFCKAFNARTAQMEKGTPIPVVITAYGDRSFTFEMKLPPVSYFLKKASGIASGSKTAGRGFAGKISKAQIREIAEKKMPDLNCASVDAAMTMIEGSARSMGLEITG</sequence>
<evidence type="ECO:0000255" key="1">
    <source>
        <dbReference type="HAMAP-Rule" id="MF_00736"/>
    </source>
</evidence>
<evidence type="ECO:0000305" key="2"/>
<reference key="1">
    <citation type="journal article" date="2010" name="J. Bacteriol.">
        <title>Complete genome sequence of the aerobic facultative methanotroph Methylocella silvestris BL2.</title>
        <authorList>
            <person name="Chen Y."/>
            <person name="Crombie A."/>
            <person name="Rahman M.T."/>
            <person name="Dedysh S.N."/>
            <person name="Liesack W."/>
            <person name="Stott M.B."/>
            <person name="Alam M."/>
            <person name="Theisen A.R."/>
            <person name="Murrell J.C."/>
            <person name="Dunfield P.F."/>
        </authorList>
    </citation>
    <scope>NUCLEOTIDE SEQUENCE [LARGE SCALE GENOMIC DNA]</scope>
    <source>
        <strain>DSM 15510 / CIP 108128 / LMG 27833 / NCIMB 13906 / BL2</strain>
    </source>
</reference>
<name>RL11_METSB</name>
<dbReference type="EMBL" id="CP001280">
    <property type="protein sequence ID" value="ACK52746.1"/>
    <property type="molecule type" value="Genomic_DNA"/>
</dbReference>
<dbReference type="RefSeq" id="WP_012592814.1">
    <property type="nucleotide sequence ID" value="NC_011666.1"/>
</dbReference>
<dbReference type="SMR" id="B8EMR7"/>
<dbReference type="STRING" id="395965.Msil_3864"/>
<dbReference type="KEGG" id="msl:Msil_3864"/>
<dbReference type="eggNOG" id="COG0080">
    <property type="taxonomic scope" value="Bacteria"/>
</dbReference>
<dbReference type="HOGENOM" id="CLU_074237_2_1_5"/>
<dbReference type="OrthoDB" id="9802408at2"/>
<dbReference type="Proteomes" id="UP000002257">
    <property type="component" value="Chromosome"/>
</dbReference>
<dbReference type="GO" id="GO:0022625">
    <property type="term" value="C:cytosolic large ribosomal subunit"/>
    <property type="evidence" value="ECO:0007669"/>
    <property type="project" value="TreeGrafter"/>
</dbReference>
<dbReference type="GO" id="GO:0070180">
    <property type="term" value="F:large ribosomal subunit rRNA binding"/>
    <property type="evidence" value="ECO:0007669"/>
    <property type="project" value="UniProtKB-UniRule"/>
</dbReference>
<dbReference type="GO" id="GO:0003735">
    <property type="term" value="F:structural constituent of ribosome"/>
    <property type="evidence" value="ECO:0007669"/>
    <property type="project" value="InterPro"/>
</dbReference>
<dbReference type="GO" id="GO:0006412">
    <property type="term" value="P:translation"/>
    <property type="evidence" value="ECO:0007669"/>
    <property type="project" value="UniProtKB-UniRule"/>
</dbReference>
<dbReference type="CDD" id="cd00349">
    <property type="entry name" value="Ribosomal_L11"/>
    <property type="match status" value="1"/>
</dbReference>
<dbReference type="FunFam" id="1.10.10.250:FF:000001">
    <property type="entry name" value="50S ribosomal protein L11"/>
    <property type="match status" value="1"/>
</dbReference>
<dbReference type="FunFam" id="3.30.1550.10:FF:000001">
    <property type="entry name" value="50S ribosomal protein L11"/>
    <property type="match status" value="1"/>
</dbReference>
<dbReference type="Gene3D" id="1.10.10.250">
    <property type="entry name" value="Ribosomal protein L11, C-terminal domain"/>
    <property type="match status" value="1"/>
</dbReference>
<dbReference type="Gene3D" id="3.30.1550.10">
    <property type="entry name" value="Ribosomal protein L11/L12, N-terminal domain"/>
    <property type="match status" value="1"/>
</dbReference>
<dbReference type="HAMAP" id="MF_00736">
    <property type="entry name" value="Ribosomal_uL11"/>
    <property type="match status" value="1"/>
</dbReference>
<dbReference type="InterPro" id="IPR000911">
    <property type="entry name" value="Ribosomal_uL11"/>
</dbReference>
<dbReference type="InterPro" id="IPR006519">
    <property type="entry name" value="Ribosomal_uL11_bac-typ"/>
</dbReference>
<dbReference type="InterPro" id="IPR020783">
    <property type="entry name" value="Ribosomal_uL11_C"/>
</dbReference>
<dbReference type="InterPro" id="IPR036769">
    <property type="entry name" value="Ribosomal_uL11_C_sf"/>
</dbReference>
<dbReference type="InterPro" id="IPR020784">
    <property type="entry name" value="Ribosomal_uL11_N"/>
</dbReference>
<dbReference type="InterPro" id="IPR036796">
    <property type="entry name" value="Ribosomal_uL11_N_sf"/>
</dbReference>
<dbReference type="NCBIfam" id="TIGR01632">
    <property type="entry name" value="L11_bact"/>
    <property type="match status" value="1"/>
</dbReference>
<dbReference type="PANTHER" id="PTHR11661">
    <property type="entry name" value="60S RIBOSOMAL PROTEIN L12"/>
    <property type="match status" value="1"/>
</dbReference>
<dbReference type="PANTHER" id="PTHR11661:SF1">
    <property type="entry name" value="LARGE RIBOSOMAL SUBUNIT PROTEIN UL11M"/>
    <property type="match status" value="1"/>
</dbReference>
<dbReference type="Pfam" id="PF00298">
    <property type="entry name" value="Ribosomal_L11"/>
    <property type="match status" value="1"/>
</dbReference>
<dbReference type="Pfam" id="PF03946">
    <property type="entry name" value="Ribosomal_L11_N"/>
    <property type="match status" value="1"/>
</dbReference>
<dbReference type="SMART" id="SM00649">
    <property type="entry name" value="RL11"/>
    <property type="match status" value="1"/>
</dbReference>
<dbReference type="SUPFAM" id="SSF54747">
    <property type="entry name" value="Ribosomal L11/L12e N-terminal domain"/>
    <property type="match status" value="1"/>
</dbReference>
<dbReference type="SUPFAM" id="SSF46906">
    <property type="entry name" value="Ribosomal protein L11, C-terminal domain"/>
    <property type="match status" value="1"/>
</dbReference>
<feature type="chain" id="PRO_1000195672" description="Large ribosomal subunit protein uL11">
    <location>
        <begin position="1"/>
        <end position="142"/>
    </location>
</feature>
<proteinExistence type="inferred from homology"/>
<protein>
    <recommendedName>
        <fullName evidence="1">Large ribosomal subunit protein uL11</fullName>
    </recommendedName>
    <alternativeName>
        <fullName evidence="2">50S ribosomal protein L11</fullName>
    </alternativeName>
</protein>
<comment type="function">
    <text evidence="1">Forms part of the ribosomal stalk which helps the ribosome interact with GTP-bound translation factors.</text>
</comment>
<comment type="subunit">
    <text evidence="1">Part of the ribosomal stalk of the 50S ribosomal subunit. Interacts with L10 and the large rRNA to form the base of the stalk. L10 forms an elongated spine to which L12 dimers bind in a sequential fashion forming a multimeric L10(L12)X complex.</text>
</comment>
<comment type="PTM">
    <text evidence="1">One or more lysine residues are methylated.</text>
</comment>
<comment type="similarity">
    <text evidence="1">Belongs to the universal ribosomal protein uL11 family.</text>
</comment>
<keyword id="KW-0488">Methylation</keyword>
<keyword id="KW-1185">Reference proteome</keyword>
<keyword id="KW-0687">Ribonucleoprotein</keyword>
<keyword id="KW-0689">Ribosomal protein</keyword>
<keyword id="KW-0694">RNA-binding</keyword>
<keyword id="KW-0699">rRNA-binding</keyword>
<organism>
    <name type="scientific">Methylocella silvestris (strain DSM 15510 / CIP 108128 / LMG 27833 / NCIMB 13906 / BL2)</name>
    <dbReference type="NCBI Taxonomy" id="395965"/>
    <lineage>
        <taxon>Bacteria</taxon>
        <taxon>Pseudomonadati</taxon>
        <taxon>Pseudomonadota</taxon>
        <taxon>Alphaproteobacteria</taxon>
        <taxon>Hyphomicrobiales</taxon>
        <taxon>Beijerinckiaceae</taxon>
        <taxon>Methylocella</taxon>
    </lineage>
</organism>
<gene>
    <name evidence="1" type="primary">rplK</name>
    <name type="ordered locus">Msil_3864</name>
</gene>